<gene>
    <name evidence="1" type="primary">rplP</name>
    <name type="ordered locus">WD_0674</name>
</gene>
<reference key="1">
    <citation type="journal article" date="2004" name="PLoS Biol.">
        <title>Phylogenomics of the reproductive parasite Wolbachia pipientis wMel: a streamlined genome overrun by mobile genetic elements.</title>
        <authorList>
            <person name="Wu M."/>
            <person name="Sun L.V."/>
            <person name="Vamathevan J.J."/>
            <person name="Riegler M."/>
            <person name="DeBoy R.T."/>
            <person name="Brownlie J.C."/>
            <person name="McGraw E.A."/>
            <person name="Martin W."/>
            <person name="Esser C."/>
            <person name="Ahmadinejad N."/>
            <person name="Wiegand C."/>
            <person name="Madupu R."/>
            <person name="Beanan M.J."/>
            <person name="Brinkac L.M."/>
            <person name="Daugherty S.C."/>
            <person name="Durkin A.S."/>
            <person name="Kolonay J.F."/>
            <person name="Nelson W.C."/>
            <person name="Mohamoud Y."/>
            <person name="Lee P."/>
            <person name="Berry K.J."/>
            <person name="Young M.B."/>
            <person name="Utterback T.R."/>
            <person name="Weidman J.F."/>
            <person name="Nierman W.C."/>
            <person name="Paulsen I.T."/>
            <person name="Nelson K.E."/>
            <person name="Tettelin H."/>
            <person name="O'Neill S.L."/>
            <person name="Eisen J.A."/>
        </authorList>
    </citation>
    <scope>NUCLEOTIDE SEQUENCE [LARGE SCALE GENOMIC DNA]</scope>
</reference>
<organism>
    <name type="scientific">Wolbachia pipientis wMel</name>
    <dbReference type="NCBI Taxonomy" id="163164"/>
    <lineage>
        <taxon>Bacteria</taxon>
        <taxon>Pseudomonadati</taxon>
        <taxon>Pseudomonadota</taxon>
        <taxon>Alphaproteobacteria</taxon>
        <taxon>Rickettsiales</taxon>
        <taxon>Anaplasmataceae</taxon>
        <taxon>Wolbachieae</taxon>
        <taxon>Wolbachia</taxon>
    </lineage>
</organism>
<comment type="function">
    <text evidence="1">Binds 23S rRNA and is also seen to make contacts with the A and possibly P site tRNAs.</text>
</comment>
<comment type="subunit">
    <text evidence="1">Part of the 50S ribosomal subunit.</text>
</comment>
<comment type="similarity">
    <text evidence="1">Belongs to the universal ribosomal protein uL16 family.</text>
</comment>
<sequence>MFIPKKSKYKKVFKGRIKGNTKGGSTLSFGDYGLKAMEAGRIQSKHIETARRVISRTLKRSGKVWIRIFPDTPVSKKPADVRMGKGKGSVEFWVFKAKPGRMLFEISSDVPMHLARLALEKATAKLPMKCKFVSNHN</sequence>
<accession>Q73H93</accession>
<feature type="chain" id="PRO_0000062250" description="Large ribosomal subunit protein uL16">
    <location>
        <begin position="1"/>
        <end position="137"/>
    </location>
</feature>
<keyword id="KW-0687">Ribonucleoprotein</keyword>
<keyword id="KW-0689">Ribosomal protein</keyword>
<keyword id="KW-0694">RNA-binding</keyword>
<keyword id="KW-0699">rRNA-binding</keyword>
<keyword id="KW-0820">tRNA-binding</keyword>
<dbReference type="EMBL" id="AE017196">
    <property type="protein sequence ID" value="AAS14372.1"/>
    <property type="molecule type" value="Genomic_DNA"/>
</dbReference>
<dbReference type="RefSeq" id="WP_010962752.1">
    <property type="nucleotide sequence ID" value="NZ_OX384529.1"/>
</dbReference>
<dbReference type="SMR" id="Q73H93"/>
<dbReference type="EnsemblBacteria" id="AAS14372">
    <property type="protein sequence ID" value="AAS14372"/>
    <property type="gene ID" value="WD_0674"/>
</dbReference>
<dbReference type="GeneID" id="70036157"/>
<dbReference type="KEGG" id="wol:WD_0674"/>
<dbReference type="eggNOG" id="COG0197">
    <property type="taxonomic scope" value="Bacteria"/>
</dbReference>
<dbReference type="Proteomes" id="UP000008215">
    <property type="component" value="Chromosome"/>
</dbReference>
<dbReference type="GO" id="GO:0022625">
    <property type="term" value="C:cytosolic large ribosomal subunit"/>
    <property type="evidence" value="ECO:0007669"/>
    <property type="project" value="TreeGrafter"/>
</dbReference>
<dbReference type="GO" id="GO:0019843">
    <property type="term" value="F:rRNA binding"/>
    <property type="evidence" value="ECO:0007669"/>
    <property type="project" value="UniProtKB-UniRule"/>
</dbReference>
<dbReference type="GO" id="GO:0003735">
    <property type="term" value="F:structural constituent of ribosome"/>
    <property type="evidence" value="ECO:0007669"/>
    <property type="project" value="InterPro"/>
</dbReference>
<dbReference type="GO" id="GO:0000049">
    <property type="term" value="F:tRNA binding"/>
    <property type="evidence" value="ECO:0007669"/>
    <property type="project" value="UniProtKB-KW"/>
</dbReference>
<dbReference type="GO" id="GO:0006412">
    <property type="term" value="P:translation"/>
    <property type="evidence" value="ECO:0007669"/>
    <property type="project" value="UniProtKB-UniRule"/>
</dbReference>
<dbReference type="CDD" id="cd01433">
    <property type="entry name" value="Ribosomal_L16_L10e"/>
    <property type="match status" value="1"/>
</dbReference>
<dbReference type="FunFam" id="3.90.1170.10:FF:000001">
    <property type="entry name" value="50S ribosomal protein L16"/>
    <property type="match status" value="1"/>
</dbReference>
<dbReference type="Gene3D" id="3.90.1170.10">
    <property type="entry name" value="Ribosomal protein L10e/L16"/>
    <property type="match status" value="1"/>
</dbReference>
<dbReference type="HAMAP" id="MF_01342">
    <property type="entry name" value="Ribosomal_uL16"/>
    <property type="match status" value="1"/>
</dbReference>
<dbReference type="InterPro" id="IPR047873">
    <property type="entry name" value="Ribosomal_uL16"/>
</dbReference>
<dbReference type="InterPro" id="IPR000114">
    <property type="entry name" value="Ribosomal_uL16_bact-type"/>
</dbReference>
<dbReference type="InterPro" id="IPR020798">
    <property type="entry name" value="Ribosomal_uL16_CS"/>
</dbReference>
<dbReference type="InterPro" id="IPR016180">
    <property type="entry name" value="Ribosomal_uL16_dom"/>
</dbReference>
<dbReference type="InterPro" id="IPR036920">
    <property type="entry name" value="Ribosomal_uL16_sf"/>
</dbReference>
<dbReference type="NCBIfam" id="TIGR01164">
    <property type="entry name" value="rplP_bact"/>
    <property type="match status" value="1"/>
</dbReference>
<dbReference type="PANTHER" id="PTHR12220">
    <property type="entry name" value="50S/60S RIBOSOMAL PROTEIN L16"/>
    <property type="match status" value="1"/>
</dbReference>
<dbReference type="PANTHER" id="PTHR12220:SF13">
    <property type="entry name" value="LARGE RIBOSOMAL SUBUNIT PROTEIN UL16M"/>
    <property type="match status" value="1"/>
</dbReference>
<dbReference type="Pfam" id="PF00252">
    <property type="entry name" value="Ribosomal_L16"/>
    <property type="match status" value="1"/>
</dbReference>
<dbReference type="PRINTS" id="PR00060">
    <property type="entry name" value="RIBOSOMALL16"/>
</dbReference>
<dbReference type="SUPFAM" id="SSF54686">
    <property type="entry name" value="Ribosomal protein L16p/L10e"/>
    <property type="match status" value="1"/>
</dbReference>
<dbReference type="PROSITE" id="PS00586">
    <property type="entry name" value="RIBOSOMAL_L16_1"/>
    <property type="match status" value="1"/>
</dbReference>
<dbReference type="PROSITE" id="PS00701">
    <property type="entry name" value="RIBOSOMAL_L16_2"/>
    <property type="match status" value="1"/>
</dbReference>
<proteinExistence type="inferred from homology"/>
<evidence type="ECO:0000255" key="1">
    <source>
        <dbReference type="HAMAP-Rule" id="MF_01342"/>
    </source>
</evidence>
<evidence type="ECO:0000305" key="2"/>
<name>RL16_WOLPM</name>
<protein>
    <recommendedName>
        <fullName evidence="1">Large ribosomal subunit protein uL16</fullName>
    </recommendedName>
    <alternativeName>
        <fullName evidence="2">50S ribosomal protein L16</fullName>
    </alternativeName>
</protein>